<dbReference type="EC" id="2.5.1.75" evidence="1"/>
<dbReference type="EMBL" id="CP000395">
    <property type="protein sequence ID" value="ABH02098.1"/>
    <property type="molecule type" value="Genomic_DNA"/>
</dbReference>
<dbReference type="EMBL" id="CP002933">
    <property type="protein sequence ID" value="AEL70038.1"/>
    <property type="molecule type" value="Genomic_DNA"/>
</dbReference>
<dbReference type="RefSeq" id="WP_011601252.1">
    <property type="nucleotide sequence ID" value="NZ_CP160066.1"/>
</dbReference>
<dbReference type="SMR" id="Q0SM30"/>
<dbReference type="STRING" id="29518.BLA32_00115"/>
<dbReference type="GeneID" id="77265677"/>
<dbReference type="KEGG" id="baf:BAPKO_0874"/>
<dbReference type="KEGG" id="bafz:BafPKo_0849"/>
<dbReference type="PATRIC" id="fig|390236.22.peg.810"/>
<dbReference type="eggNOG" id="COG0324">
    <property type="taxonomic scope" value="Bacteria"/>
</dbReference>
<dbReference type="HOGENOM" id="CLU_032616_0_2_12"/>
<dbReference type="OrthoDB" id="9776390at2"/>
<dbReference type="Proteomes" id="UP000005216">
    <property type="component" value="Chromosome"/>
</dbReference>
<dbReference type="GO" id="GO:0005524">
    <property type="term" value="F:ATP binding"/>
    <property type="evidence" value="ECO:0007669"/>
    <property type="project" value="UniProtKB-UniRule"/>
</dbReference>
<dbReference type="GO" id="GO:0052381">
    <property type="term" value="F:tRNA dimethylallyltransferase activity"/>
    <property type="evidence" value="ECO:0007669"/>
    <property type="project" value="UniProtKB-UniRule"/>
</dbReference>
<dbReference type="GO" id="GO:0006400">
    <property type="term" value="P:tRNA modification"/>
    <property type="evidence" value="ECO:0007669"/>
    <property type="project" value="TreeGrafter"/>
</dbReference>
<dbReference type="Gene3D" id="1.10.20.140">
    <property type="match status" value="1"/>
</dbReference>
<dbReference type="Gene3D" id="3.40.50.300">
    <property type="entry name" value="P-loop containing nucleotide triphosphate hydrolases"/>
    <property type="match status" value="1"/>
</dbReference>
<dbReference type="HAMAP" id="MF_00185">
    <property type="entry name" value="IPP_trans"/>
    <property type="match status" value="1"/>
</dbReference>
<dbReference type="InterPro" id="IPR039657">
    <property type="entry name" value="Dimethylallyltransferase"/>
</dbReference>
<dbReference type="InterPro" id="IPR018022">
    <property type="entry name" value="IPT"/>
</dbReference>
<dbReference type="InterPro" id="IPR027417">
    <property type="entry name" value="P-loop_NTPase"/>
</dbReference>
<dbReference type="NCBIfam" id="TIGR00174">
    <property type="entry name" value="miaA"/>
    <property type="match status" value="1"/>
</dbReference>
<dbReference type="PANTHER" id="PTHR11088">
    <property type="entry name" value="TRNA DIMETHYLALLYLTRANSFERASE"/>
    <property type="match status" value="1"/>
</dbReference>
<dbReference type="PANTHER" id="PTHR11088:SF60">
    <property type="entry name" value="TRNA DIMETHYLALLYLTRANSFERASE"/>
    <property type="match status" value="1"/>
</dbReference>
<dbReference type="Pfam" id="PF01715">
    <property type="entry name" value="IPPT"/>
    <property type="match status" value="1"/>
</dbReference>
<dbReference type="SUPFAM" id="SSF52540">
    <property type="entry name" value="P-loop containing nucleoside triphosphate hydrolases"/>
    <property type="match status" value="1"/>
</dbReference>
<comment type="function">
    <text evidence="1">Catalyzes the transfer of a dimethylallyl group onto the adenine at position 37 in tRNAs that read codons beginning with uridine, leading to the formation of N6-(dimethylallyl)adenosine (i(6)A).</text>
</comment>
<comment type="catalytic activity">
    <reaction evidence="1">
        <text>adenosine(37) in tRNA + dimethylallyl diphosphate = N(6)-dimethylallyladenosine(37) in tRNA + diphosphate</text>
        <dbReference type="Rhea" id="RHEA:26482"/>
        <dbReference type="Rhea" id="RHEA-COMP:10162"/>
        <dbReference type="Rhea" id="RHEA-COMP:10375"/>
        <dbReference type="ChEBI" id="CHEBI:33019"/>
        <dbReference type="ChEBI" id="CHEBI:57623"/>
        <dbReference type="ChEBI" id="CHEBI:74411"/>
        <dbReference type="ChEBI" id="CHEBI:74415"/>
        <dbReference type="EC" id="2.5.1.75"/>
    </reaction>
</comment>
<comment type="cofactor">
    <cofactor evidence="1">
        <name>Mg(2+)</name>
        <dbReference type="ChEBI" id="CHEBI:18420"/>
    </cofactor>
</comment>
<comment type="subunit">
    <text evidence="1">Monomer.</text>
</comment>
<comment type="similarity">
    <text evidence="1">Belongs to the IPP transferase family.</text>
</comment>
<accession>Q0SM30</accession>
<accession>G0IS03</accession>
<organism>
    <name type="scientific">Borreliella afzelii (strain PKo)</name>
    <name type="common">Borrelia afzelii</name>
    <dbReference type="NCBI Taxonomy" id="390236"/>
    <lineage>
        <taxon>Bacteria</taxon>
        <taxon>Pseudomonadati</taxon>
        <taxon>Spirochaetota</taxon>
        <taxon>Spirochaetia</taxon>
        <taxon>Spirochaetales</taxon>
        <taxon>Borreliaceae</taxon>
        <taxon>Borreliella</taxon>
    </lineage>
</organism>
<name>MIAA_BORAP</name>
<sequence length="300" mass="35076">MKEDRIVFIFGPTAVGKSNILFHFPRNKAEIINVDSIQVYKEFNIASSKPGKSLMKHIKHHLVDFLEPEKEYTLGIFYEQALKIVKEIRQKKKIPIFVGGTAFYFKHLKDGFPSTPLVTSKIRIYVNNLLDLKGKSHLLKELKNVDPIRFNMLNKNDIYRIKRSLEVYYQTGIPISQFQKKQNSEFKNILIVGLKRSFEDLKTRISIRINEMLNSGLLSEIKGLFSKGYNENTPAFKGIGYNEFLLWKSRPWYSLNDIISLINKNSVLYAKRQMTFFAKMPDVLWFHPEDDLDDILNLIF</sequence>
<evidence type="ECO:0000255" key="1">
    <source>
        <dbReference type="HAMAP-Rule" id="MF_00185"/>
    </source>
</evidence>
<keyword id="KW-0067">ATP-binding</keyword>
<keyword id="KW-0460">Magnesium</keyword>
<keyword id="KW-0547">Nucleotide-binding</keyword>
<keyword id="KW-0808">Transferase</keyword>
<keyword id="KW-0819">tRNA processing</keyword>
<proteinExistence type="inferred from homology"/>
<reference key="1">
    <citation type="journal article" date="2006" name="BMC Genomics">
        <title>Comparative genome analysis: selection pressure on the Borrelia vls cassettes is essential for infectivity.</title>
        <authorList>
            <person name="Gloeckner G."/>
            <person name="Schulte-Spechtel U."/>
            <person name="Schilhabel M."/>
            <person name="Felder M."/>
            <person name="Suehnel J."/>
            <person name="Wilske B."/>
            <person name="Platzer M."/>
        </authorList>
    </citation>
    <scope>NUCLEOTIDE SEQUENCE [LARGE SCALE GENOMIC DNA]</scope>
    <source>
        <strain>PKo</strain>
    </source>
</reference>
<reference key="2">
    <citation type="journal article" date="2011" name="J. Bacteriol.">
        <title>Whole-genome sequences of two Borrelia afzelii and two Borrelia garinii Lyme disease agent isolates.</title>
        <authorList>
            <person name="Casjens S.R."/>
            <person name="Mongodin E.F."/>
            <person name="Qiu W.G."/>
            <person name="Dunn J.J."/>
            <person name="Luft B.J."/>
            <person name="Fraser-Liggett C.M."/>
            <person name="Schutzer S.E."/>
        </authorList>
    </citation>
    <scope>NUCLEOTIDE SEQUENCE [LARGE SCALE GENOMIC DNA]</scope>
    <source>
        <strain>PKo</strain>
    </source>
</reference>
<gene>
    <name evidence="1" type="primary">miaA</name>
    <name type="ordered locus">BAPKO_0874</name>
    <name type="ordered locus">BafPKo_0849</name>
</gene>
<protein>
    <recommendedName>
        <fullName evidence="1">tRNA dimethylallyltransferase</fullName>
        <ecNumber evidence="1">2.5.1.75</ecNumber>
    </recommendedName>
    <alternativeName>
        <fullName evidence="1">Dimethylallyl diphosphate:tRNA dimethylallyltransferase</fullName>
        <shortName evidence="1">DMAPP:tRNA dimethylallyltransferase</shortName>
        <shortName evidence="1">DMATase</shortName>
    </alternativeName>
    <alternativeName>
        <fullName evidence="1">Isopentenyl-diphosphate:tRNA isopentenyltransferase</fullName>
        <shortName evidence="1">IPP transferase</shortName>
        <shortName evidence="1">IPPT</shortName>
        <shortName evidence="1">IPTase</shortName>
    </alternativeName>
</protein>
<feature type="chain" id="PRO_1000020566" description="tRNA dimethylallyltransferase">
    <location>
        <begin position="1"/>
        <end position="300"/>
    </location>
</feature>
<feature type="region of interest" description="Interaction with substrate tRNA" evidence="1">
    <location>
        <begin position="35"/>
        <end position="38"/>
    </location>
</feature>
<feature type="binding site" evidence="1">
    <location>
        <begin position="11"/>
        <end position="18"/>
    </location>
    <ligand>
        <name>ATP</name>
        <dbReference type="ChEBI" id="CHEBI:30616"/>
    </ligand>
</feature>
<feature type="binding site" evidence="1">
    <location>
        <begin position="13"/>
        <end position="18"/>
    </location>
    <ligand>
        <name>substrate</name>
    </ligand>
</feature>
<feature type="site" description="Interaction with substrate tRNA" evidence="1">
    <location>
        <position position="101"/>
    </location>
</feature>
<feature type="site" description="Interaction with substrate tRNA" evidence="1">
    <location>
        <position position="123"/>
    </location>
</feature>